<comment type="function">
    <text evidence="1">Regulates the transcription of several operons and genes involved in the biogenesis of Fe-S clusters and Fe-S-containing proteins.</text>
</comment>
<comment type="cofactor">
    <cofactor evidence="1">
        <name>[2Fe-2S] cluster</name>
        <dbReference type="ChEBI" id="CHEBI:190135"/>
    </cofactor>
    <text evidence="1">Binds 1 [2Fe-2S] cluster.</text>
</comment>
<dbReference type="EMBL" id="CU928158">
    <property type="protein sequence ID" value="CAQ88185.1"/>
    <property type="molecule type" value="Genomic_DNA"/>
</dbReference>
<dbReference type="RefSeq" id="WP_001241357.1">
    <property type="nucleotide sequence ID" value="NC_011740.1"/>
</dbReference>
<dbReference type="SMR" id="B7LJQ3"/>
<dbReference type="GeneID" id="86947421"/>
<dbReference type="KEGG" id="efe:EFER_0641"/>
<dbReference type="HOGENOM" id="CLU_107144_0_0_6"/>
<dbReference type="OrthoDB" id="9808360at2"/>
<dbReference type="Proteomes" id="UP000000745">
    <property type="component" value="Chromosome"/>
</dbReference>
<dbReference type="GO" id="GO:0005829">
    <property type="term" value="C:cytosol"/>
    <property type="evidence" value="ECO:0007669"/>
    <property type="project" value="TreeGrafter"/>
</dbReference>
<dbReference type="GO" id="GO:0051537">
    <property type="term" value="F:2 iron, 2 sulfur cluster binding"/>
    <property type="evidence" value="ECO:0007669"/>
    <property type="project" value="UniProtKB-KW"/>
</dbReference>
<dbReference type="GO" id="GO:0003700">
    <property type="term" value="F:DNA-binding transcription factor activity"/>
    <property type="evidence" value="ECO:0007669"/>
    <property type="project" value="UniProtKB-UniRule"/>
</dbReference>
<dbReference type="GO" id="GO:0003690">
    <property type="term" value="F:double-stranded DNA binding"/>
    <property type="evidence" value="ECO:0007669"/>
    <property type="project" value="UniProtKB-UniRule"/>
</dbReference>
<dbReference type="GO" id="GO:0005506">
    <property type="term" value="F:iron ion binding"/>
    <property type="evidence" value="ECO:0007669"/>
    <property type="project" value="UniProtKB-UniRule"/>
</dbReference>
<dbReference type="FunFam" id="1.10.10.10:FF:000026">
    <property type="entry name" value="HTH-type transcriptional regulator IscR"/>
    <property type="match status" value="1"/>
</dbReference>
<dbReference type="Gene3D" id="1.10.10.10">
    <property type="entry name" value="Winged helix-like DNA-binding domain superfamily/Winged helix DNA-binding domain"/>
    <property type="match status" value="1"/>
</dbReference>
<dbReference type="HAMAP" id="MF_01176">
    <property type="entry name" value="HTH_type_IscR"/>
    <property type="match status" value="1"/>
</dbReference>
<dbReference type="InterPro" id="IPR010242">
    <property type="entry name" value="TF_HTH_IscR"/>
</dbReference>
<dbReference type="InterPro" id="IPR030489">
    <property type="entry name" value="TR_Rrf2-type_CS"/>
</dbReference>
<dbReference type="InterPro" id="IPR000944">
    <property type="entry name" value="Tscrpt_reg_Rrf2"/>
</dbReference>
<dbReference type="InterPro" id="IPR036388">
    <property type="entry name" value="WH-like_DNA-bd_sf"/>
</dbReference>
<dbReference type="InterPro" id="IPR036390">
    <property type="entry name" value="WH_DNA-bd_sf"/>
</dbReference>
<dbReference type="NCBIfam" id="TIGR02010">
    <property type="entry name" value="IscR"/>
    <property type="match status" value="1"/>
</dbReference>
<dbReference type="NCBIfam" id="NF008110">
    <property type="entry name" value="PRK10857.1"/>
    <property type="match status" value="1"/>
</dbReference>
<dbReference type="NCBIfam" id="TIGR00738">
    <property type="entry name" value="rrf2_super"/>
    <property type="match status" value="1"/>
</dbReference>
<dbReference type="PANTHER" id="PTHR33221:SF5">
    <property type="entry name" value="HTH-TYPE TRANSCRIPTIONAL REGULATOR ISCR"/>
    <property type="match status" value="1"/>
</dbReference>
<dbReference type="PANTHER" id="PTHR33221">
    <property type="entry name" value="WINGED HELIX-TURN-HELIX TRANSCRIPTIONAL REGULATOR, RRF2 FAMILY"/>
    <property type="match status" value="1"/>
</dbReference>
<dbReference type="Pfam" id="PF02082">
    <property type="entry name" value="Rrf2"/>
    <property type="match status" value="1"/>
</dbReference>
<dbReference type="SUPFAM" id="SSF46785">
    <property type="entry name" value="Winged helix' DNA-binding domain"/>
    <property type="match status" value="1"/>
</dbReference>
<dbReference type="PROSITE" id="PS01332">
    <property type="entry name" value="HTH_RRF2_1"/>
    <property type="match status" value="1"/>
</dbReference>
<dbReference type="PROSITE" id="PS51197">
    <property type="entry name" value="HTH_RRF2_2"/>
    <property type="match status" value="1"/>
</dbReference>
<organism>
    <name type="scientific">Escherichia fergusonii (strain ATCC 35469 / DSM 13698 / CCUG 18766 / IAM 14443 / JCM 21226 / LMG 7866 / NBRC 102419 / NCTC 12128 / CDC 0568-73)</name>
    <dbReference type="NCBI Taxonomy" id="585054"/>
    <lineage>
        <taxon>Bacteria</taxon>
        <taxon>Pseudomonadati</taxon>
        <taxon>Pseudomonadota</taxon>
        <taxon>Gammaproteobacteria</taxon>
        <taxon>Enterobacterales</taxon>
        <taxon>Enterobacteriaceae</taxon>
        <taxon>Escherichia</taxon>
    </lineage>
</organism>
<reference key="1">
    <citation type="journal article" date="2009" name="PLoS Genet.">
        <title>Organised genome dynamics in the Escherichia coli species results in highly diverse adaptive paths.</title>
        <authorList>
            <person name="Touchon M."/>
            <person name="Hoede C."/>
            <person name="Tenaillon O."/>
            <person name="Barbe V."/>
            <person name="Baeriswyl S."/>
            <person name="Bidet P."/>
            <person name="Bingen E."/>
            <person name="Bonacorsi S."/>
            <person name="Bouchier C."/>
            <person name="Bouvet O."/>
            <person name="Calteau A."/>
            <person name="Chiapello H."/>
            <person name="Clermont O."/>
            <person name="Cruveiller S."/>
            <person name="Danchin A."/>
            <person name="Diard M."/>
            <person name="Dossat C."/>
            <person name="Karoui M.E."/>
            <person name="Frapy E."/>
            <person name="Garry L."/>
            <person name="Ghigo J.M."/>
            <person name="Gilles A.M."/>
            <person name="Johnson J."/>
            <person name="Le Bouguenec C."/>
            <person name="Lescat M."/>
            <person name="Mangenot S."/>
            <person name="Martinez-Jehanne V."/>
            <person name="Matic I."/>
            <person name="Nassif X."/>
            <person name="Oztas S."/>
            <person name="Petit M.A."/>
            <person name="Pichon C."/>
            <person name="Rouy Z."/>
            <person name="Ruf C.S."/>
            <person name="Schneider D."/>
            <person name="Tourret J."/>
            <person name="Vacherie B."/>
            <person name="Vallenet D."/>
            <person name="Medigue C."/>
            <person name="Rocha E.P.C."/>
            <person name="Denamur E."/>
        </authorList>
    </citation>
    <scope>NUCLEOTIDE SEQUENCE [LARGE SCALE GENOMIC DNA]</scope>
    <source>
        <strain>ATCC 35469 / DSM 13698 / BCRC 15582 / CCUG 18766 / IAM 14443 / JCM 21226 / LMG 7866 / NBRC 102419 / NCTC 12128 / CDC 0568-73</strain>
    </source>
</reference>
<gene>
    <name evidence="1" type="primary">iscR</name>
    <name type="ordered locus">EFER_0641</name>
</gene>
<sequence>MRLTSKGRYAVTAMLDVALNSEAGPVPLADISERQGISLSYLEQLFSRLRKNGLVSSVRGPGGGYLLGKDASSIAVGEVISAVDESVDATRCQGKGGCQGGDKCLTHALWRDLSDRLTGFLNNITLGELVNNQEVLDVSGRQHTHDAPRTRTQDAIDVKLRA</sequence>
<accession>B7LJQ3</accession>
<feature type="chain" id="PRO_1000138102" description="HTH-type transcriptional regulator IscR">
    <location>
        <begin position="1"/>
        <end position="162"/>
    </location>
</feature>
<feature type="domain" description="HTH rrf2-type" evidence="1">
    <location>
        <begin position="2"/>
        <end position="131"/>
    </location>
</feature>
<feature type="DNA-binding region" description="H-T-H motif" evidence="1">
    <location>
        <begin position="28"/>
        <end position="51"/>
    </location>
</feature>
<feature type="region of interest" description="Disordered" evidence="2">
    <location>
        <begin position="140"/>
        <end position="162"/>
    </location>
</feature>
<feature type="compositionally biased region" description="Basic and acidic residues" evidence="2">
    <location>
        <begin position="143"/>
        <end position="162"/>
    </location>
</feature>
<feature type="binding site" evidence="1">
    <location>
        <position position="92"/>
    </location>
    <ligand>
        <name>[2Fe-2S] cluster</name>
        <dbReference type="ChEBI" id="CHEBI:190135"/>
    </ligand>
</feature>
<feature type="binding site" evidence="1">
    <location>
        <position position="98"/>
    </location>
    <ligand>
        <name>[2Fe-2S] cluster</name>
        <dbReference type="ChEBI" id="CHEBI:190135"/>
    </ligand>
</feature>
<feature type="binding site" evidence="1">
    <location>
        <position position="104"/>
    </location>
    <ligand>
        <name>[2Fe-2S] cluster</name>
        <dbReference type="ChEBI" id="CHEBI:190135"/>
    </ligand>
</feature>
<proteinExistence type="inferred from homology"/>
<evidence type="ECO:0000255" key="1">
    <source>
        <dbReference type="HAMAP-Rule" id="MF_01176"/>
    </source>
</evidence>
<evidence type="ECO:0000256" key="2">
    <source>
        <dbReference type="SAM" id="MobiDB-lite"/>
    </source>
</evidence>
<name>ISCR_ESCF3</name>
<protein>
    <recommendedName>
        <fullName evidence="1">HTH-type transcriptional regulator IscR</fullName>
    </recommendedName>
</protein>
<keyword id="KW-0001">2Fe-2S</keyword>
<keyword id="KW-0010">Activator</keyword>
<keyword id="KW-0238">DNA-binding</keyword>
<keyword id="KW-0408">Iron</keyword>
<keyword id="KW-0411">Iron-sulfur</keyword>
<keyword id="KW-0479">Metal-binding</keyword>
<keyword id="KW-0678">Repressor</keyword>
<keyword id="KW-0804">Transcription</keyword>
<keyword id="KW-0805">Transcription regulation</keyword>